<accession>B2HN69</accession>
<comment type="function">
    <text evidence="3">Catalyzes the ATP- and NADPH-dependent reduction of carboxylic acids to the corresponding aldehydes (PubMed:23248280). Catalyzes the reduction of a wide range of aliphatic fatty acids (C6-C18) into their corresponding aldehydes. Can also reduce benzoate to benzaldehyde. Has a preference for NADPH over NADH as the electron donor (PubMed:23248280).</text>
</comment>
<comment type="catalytic activity">
    <reaction evidence="2 3">
        <text>a carboxylate + ATP + NADPH + H(+) = an aldehyde + AMP + diphosphate + NADP(+)</text>
        <dbReference type="Rhea" id="RHEA:50916"/>
        <dbReference type="ChEBI" id="CHEBI:15378"/>
        <dbReference type="ChEBI" id="CHEBI:17478"/>
        <dbReference type="ChEBI" id="CHEBI:29067"/>
        <dbReference type="ChEBI" id="CHEBI:30616"/>
        <dbReference type="ChEBI" id="CHEBI:33019"/>
        <dbReference type="ChEBI" id="CHEBI:57783"/>
        <dbReference type="ChEBI" id="CHEBI:58349"/>
        <dbReference type="ChEBI" id="CHEBI:456215"/>
    </reaction>
</comment>
<comment type="cofactor">
    <cofactor evidence="2 7">
        <name>pantetheine 4'-phosphate</name>
        <dbReference type="ChEBI" id="CHEBI:47942"/>
    </cofactor>
    <text evidence="2 7">Binds 1 phosphopantetheine covalently.</text>
</comment>
<comment type="biophysicochemical properties">
    <kinetics>
        <KM evidence="3">362 uM for benzoate</KM>
        <KM evidence="3">48 uM for NADPH</KM>
        <KM evidence="3">115 uM for ATP</KM>
        <Vmax evidence="3">2.32 umol/min/mg enzyme with benzoate as substrate</Vmax>
    </kinetics>
    <phDependence>
        <text evidence="3">Optimum pH is 7.5.</text>
    </phDependence>
    <temperatureDependence>
        <text evidence="3">Displays in vitro half-lives of 73, 70, and 48 hours at 26, 30, and 37 degrees Celsius, respectively, indicating it is a relatively stable enzyme.</text>
    </temperatureDependence>
</comment>
<comment type="domain">
    <text evidence="1 4">The N-terminal domain likely catalyzes substrate activation by formation of an initial acyl-AMP intermediate, the central region contains the phosphopantetheine attachment site, and the C-terminal domain catalyzes the reduction by NADPH of the intermediate thioester formed from the attack of the phosphopantetheine thiol at the carbonyl carbon of acyl-AMP (By similarity). Large-scale domain motions occur between the adenylation and thiolation states. Phosphopantetheine binding alters the orientation of a key Asp, resulting in a productive orientation of the bound nicotinamide. This ensures that further reduction of the aldehyde product does not occur (PubMed:28719588).</text>
</comment>
<comment type="biotechnology">
    <text evidence="3">This enzyme can be applied to the microbial production of fatty alkanes and fatty alcohols that have numerous applications as fuels, fragrances, emollients, plasticizers, thickeners, and detergents. Thus, together with complementing enzymes, the broad substrate specificity and kinetic characteristics of Car opens the road for direct and tailored enzyme-catalyzed conversion of lipids into user-ready chemical commodities.</text>
</comment>
<comment type="miscellaneous">
    <text evidence="7">The conversion of fatty acid into aldehyde involves three key steps: adenylation of the bound fatty acid substrate to form an AMP-fatty acyl complex, formation of a thioester linkage between the fatty acyl moiety and the phosphopantetheine prosthetic group, and reduction of the thioester intermediate to the aldehyde.</text>
</comment>
<comment type="similarity">
    <text evidence="2 6">Belongs to the ATP-dependent AMP-binding enzyme family. Carboxylic acid reductase subfamily.</text>
</comment>
<proteinExistence type="evidence at protein level"/>
<keyword id="KW-0002">3D-structure</keyword>
<keyword id="KW-0067">ATP-binding</keyword>
<keyword id="KW-0276">Fatty acid metabolism</keyword>
<keyword id="KW-0443">Lipid metabolism</keyword>
<keyword id="KW-0521">NADP</keyword>
<keyword id="KW-0547">Nucleotide-binding</keyword>
<keyword id="KW-0560">Oxidoreductase</keyword>
<keyword id="KW-0596">Phosphopantetheine</keyword>
<keyword id="KW-0597">Phosphoprotein</keyword>
<keyword id="KW-1185">Reference proteome</keyword>
<dbReference type="EC" id="1.2.1.-" evidence="2"/>
<dbReference type="EMBL" id="CP000854">
    <property type="protein sequence ID" value="ACC40567.1"/>
    <property type="molecule type" value="Genomic_DNA"/>
</dbReference>
<dbReference type="RefSeq" id="WP_012393886.1">
    <property type="nucleotide sequence ID" value="NC_010612.1"/>
</dbReference>
<dbReference type="PDB" id="5MSO">
    <property type="method" value="X-ray"/>
    <property type="resolution" value="1.20 A"/>
    <property type="chains" value="A=1-1174"/>
</dbReference>
<dbReference type="PDB" id="5MSU">
    <property type="method" value="X-ray"/>
    <property type="resolution" value="1.74 A"/>
    <property type="chains" value="A/B/C=1-1174"/>
</dbReference>
<dbReference type="PDBsum" id="5MSO"/>
<dbReference type="PDBsum" id="5MSU"/>
<dbReference type="SMR" id="B2HN69"/>
<dbReference type="STRING" id="216594.MMAR_2117"/>
<dbReference type="KEGG" id="mmi:MMAR_2117"/>
<dbReference type="eggNOG" id="COG1022">
    <property type="taxonomic scope" value="Bacteria"/>
</dbReference>
<dbReference type="eggNOG" id="COG3320">
    <property type="taxonomic scope" value="Bacteria"/>
</dbReference>
<dbReference type="HOGENOM" id="CLU_009549_0_0_11"/>
<dbReference type="OrthoDB" id="2472181at2"/>
<dbReference type="BRENDA" id="1.2.1.30">
    <property type="organism ID" value="3506"/>
</dbReference>
<dbReference type="Proteomes" id="UP000001190">
    <property type="component" value="Chromosome"/>
</dbReference>
<dbReference type="GO" id="GO:0016020">
    <property type="term" value="C:membrane"/>
    <property type="evidence" value="ECO:0007669"/>
    <property type="project" value="TreeGrafter"/>
</dbReference>
<dbReference type="GO" id="GO:0005524">
    <property type="term" value="F:ATP binding"/>
    <property type="evidence" value="ECO:0007669"/>
    <property type="project" value="UniProtKB-UniRule"/>
</dbReference>
<dbReference type="GO" id="GO:0004467">
    <property type="term" value="F:long-chain fatty acid-CoA ligase activity"/>
    <property type="evidence" value="ECO:0007669"/>
    <property type="project" value="TreeGrafter"/>
</dbReference>
<dbReference type="GO" id="GO:0050661">
    <property type="term" value="F:NADP binding"/>
    <property type="evidence" value="ECO:0007669"/>
    <property type="project" value="UniProtKB-UniRule"/>
</dbReference>
<dbReference type="GO" id="GO:0016620">
    <property type="term" value="F:oxidoreductase activity, acting on the aldehyde or oxo group of donors, NAD or NADP as acceptor"/>
    <property type="evidence" value="ECO:0007669"/>
    <property type="project" value="UniProtKB-UniRule"/>
</dbReference>
<dbReference type="GO" id="GO:0031177">
    <property type="term" value="F:phosphopantetheine binding"/>
    <property type="evidence" value="ECO:0007669"/>
    <property type="project" value="UniProtKB-UniRule"/>
</dbReference>
<dbReference type="GO" id="GO:0009058">
    <property type="term" value="P:biosynthetic process"/>
    <property type="evidence" value="ECO:0007669"/>
    <property type="project" value="UniProtKB-ARBA"/>
</dbReference>
<dbReference type="CDD" id="cd17632">
    <property type="entry name" value="AFD_CAR-like"/>
    <property type="match status" value="1"/>
</dbReference>
<dbReference type="CDD" id="cd05235">
    <property type="entry name" value="SDR_e1"/>
    <property type="match status" value="1"/>
</dbReference>
<dbReference type="Gene3D" id="1.10.1200.10">
    <property type="entry name" value="ACP-like"/>
    <property type="match status" value="1"/>
</dbReference>
<dbReference type="Gene3D" id="3.40.50.12780">
    <property type="entry name" value="N-terminal domain of ligase-like"/>
    <property type="match status" value="1"/>
</dbReference>
<dbReference type="Gene3D" id="3.40.50.720">
    <property type="entry name" value="NAD(P)-binding Rossmann-like Domain"/>
    <property type="match status" value="1"/>
</dbReference>
<dbReference type="HAMAP" id="MF_02247">
    <property type="entry name" value="Carbox_acid_reduct"/>
    <property type="match status" value="1"/>
</dbReference>
<dbReference type="InterPro" id="IPR036736">
    <property type="entry name" value="ACP-like_sf"/>
</dbReference>
<dbReference type="InterPro" id="IPR020845">
    <property type="entry name" value="AMP-binding_CS"/>
</dbReference>
<dbReference type="InterPro" id="IPR000873">
    <property type="entry name" value="AMP-dep_synth/lig_dom"/>
</dbReference>
<dbReference type="InterPro" id="IPR042099">
    <property type="entry name" value="ANL_N_sf"/>
</dbReference>
<dbReference type="InterPro" id="IPR046407">
    <property type="entry name" value="CAR"/>
</dbReference>
<dbReference type="InterPro" id="IPR013120">
    <property type="entry name" value="Far_NAD-bd"/>
</dbReference>
<dbReference type="InterPro" id="IPR036291">
    <property type="entry name" value="NAD(P)-bd_dom_sf"/>
</dbReference>
<dbReference type="InterPro" id="IPR020806">
    <property type="entry name" value="PKS_PP-bd"/>
</dbReference>
<dbReference type="InterPro" id="IPR009081">
    <property type="entry name" value="PP-bd_ACP"/>
</dbReference>
<dbReference type="InterPro" id="IPR010080">
    <property type="entry name" value="Thioester_reductase-like_dom"/>
</dbReference>
<dbReference type="NCBIfam" id="NF041592">
    <property type="entry name" value="carboxyl_red"/>
    <property type="match status" value="1"/>
</dbReference>
<dbReference type="NCBIfam" id="TIGR01746">
    <property type="entry name" value="Thioester-redct"/>
    <property type="match status" value="1"/>
</dbReference>
<dbReference type="PANTHER" id="PTHR43272:SF33">
    <property type="entry name" value="AMP-BINDING DOMAIN-CONTAINING PROTEIN-RELATED"/>
    <property type="match status" value="1"/>
</dbReference>
<dbReference type="PANTHER" id="PTHR43272">
    <property type="entry name" value="LONG-CHAIN-FATTY-ACID--COA LIGASE"/>
    <property type="match status" value="1"/>
</dbReference>
<dbReference type="Pfam" id="PF00501">
    <property type="entry name" value="AMP-binding"/>
    <property type="match status" value="1"/>
</dbReference>
<dbReference type="Pfam" id="PF07993">
    <property type="entry name" value="NAD_binding_4"/>
    <property type="match status" value="1"/>
</dbReference>
<dbReference type="Pfam" id="PF00550">
    <property type="entry name" value="PP-binding"/>
    <property type="match status" value="1"/>
</dbReference>
<dbReference type="SMART" id="SM00823">
    <property type="entry name" value="PKS_PP"/>
    <property type="match status" value="1"/>
</dbReference>
<dbReference type="SUPFAM" id="SSF56801">
    <property type="entry name" value="Acetyl-CoA synthetase-like"/>
    <property type="match status" value="1"/>
</dbReference>
<dbReference type="SUPFAM" id="SSF47336">
    <property type="entry name" value="ACP-like"/>
    <property type="match status" value="1"/>
</dbReference>
<dbReference type="SUPFAM" id="SSF51735">
    <property type="entry name" value="NAD(P)-binding Rossmann-fold domains"/>
    <property type="match status" value="1"/>
</dbReference>
<dbReference type="PROSITE" id="PS00061">
    <property type="entry name" value="ADH_SHORT"/>
    <property type="match status" value="1"/>
</dbReference>
<dbReference type="PROSITE" id="PS00455">
    <property type="entry name" value="AMP_BINDING"/>
    <property type="match status" value="1"/>
</dbReference>
<dbReference type="PROSITE" id="PS50075">
    <property type="entry name" value="CARRIER"/>
    <property type="match status" value="1"/>
</dbReference>
<evidence type="ECO:0000250" key="1">
    <source>
        <dbReference type="UniProtKB" id="Q6RKB1"/>
    </source>
</evidence>
<evidence type="ECO:0000255" key="2">
    <source>
        <dbReference type="HAMAP-Rule" id="MF_02247"/>
    </source>
</evidence>
<evidence type="ECO:0000269" key="3">
    <source>
    </source>
</evidence>
<evidence type="ECO:0000269" key="4">
    <source>
    </source>
</evidence>
<evidence type="ECO:0000303" key="5">
    <source>
    </source>
</evidence>
<evidence type="ECO:0000305" key="6"/>
<evidence type="ECO:0000305" key="7">
    <source>
    </source>
</evidence>
<evidence type="ECO:0007744" key="8">
    <source>
        <dbReference type="PDB" id="5MSO"/>
    </source>
</evidence>
<evidence type="ECO:0007744" key="9">
    <source>
        <dbReference type="PDB" id="5MSU"/>
    </source>
</evidence>
<evidence type="ECO:0007829" key="10">
    <source>
        <dbReference type="PDB" id="5MSO"/>
    </source>
</evidence>
<evidence type="ECO:0007829" key="11">
    <source>
        <dbReference type="PDB" id="5MSU"/>
    </source>
</evidence>
<organism>
    <name type="scientific">Mycobacterium marinum (strain ATCC BAA-535 / M)</name>
    <dbReference type="NCBI Taxonomy" id="216594"/>
    <lineage>
        <taxon>Bacteria</taxon>
        <taxon>Bacillati</taxon>
        <taxon>Actinomycetota</taxon>
        <taxon>Actinomycetes</taxon>
        <taxon>Mycobacteriales</taxon>
        <taxon>Mycobacteriaceae</taxon>
        <taxon>Mycobacterium</taxon>
        <taxon>Mycobacterium ulcerans group</taxon>
    </lineage>
</organism>
<sequence>MSPITREERLERRIQDLYANDPQFAAAKPATAITAAIERPGLPLPQIIETVMTGYADRPALAQRSVEFVTDAGTGHTTLRLLPHFETISYGELWDRISALADVLSTEQTVKPGDRVCLLGFNSVDYATIDMTLARLGAVAVPLQTSAAITQLQPIVAETQPTMIAASVDALADATELALSGQTATRVLVFDHHRQVDAHRAAVESARERLAGSAVVETLAEAIARGDVPRGASAGSAPGTDVSDDSLALLIYTSGSTGAPKGAMYPRRNVATFWRKRTWFEGGYEPSITLNFMPMSHVMGRQILYGTLCNGGTAYFVAKSDLSTLFEDLALVRPTELTFVPRVWDMVFDEFQSEVDRRLVDGADRVALEAQVKAEIRNDVLGGRYTSALTGSAPISDEMKAWVEELLDMHLVEGYGSTEAGMILIDGAIRRPAVLDYKLVDVPDLGYFLTDRPHPRGELLVKTDSLFPGYYQRAEVTADVFDADGFYRTGDIMAEVGPEQFVYLDRRNNVLKLSQGEFVTVSKLEAVFGDSPLVRQIYIYGNSARAYLLAVIVPTQEALDAVPVEELKARLGDSLQEVAKAAGLQSYEIPRDFIIETTPWTLENGLLTGIRKLARPQLKKHYGELLEQIYTDLAHGQADELRSLRQSGADAPVLVTVCRAAAALLGGSASDVQPDAHFTDLGGDSLSALSFTNLLHEIFDIEVPVGVIVSPANDLQALADYVEAARKPGSSRPTFASVHGASNGQVTEVHAGDLSLDKFIDAATLAEAPRLPAANTQVRTVLLTGATGFLGRYLALEWLERMDLVDGKLICLVRAKSDTEARARLDKTFDSGDPELLAHYRALAGDHLEVLAGDKGEADLGLDRQTWQRLADTVDLIVDPAALVNHVLPYSQLFGPNALGTAELLRLALTSKIKPYSYTSTIGVADQIPPSAFTEDADIRVISATRAVDDSYANGYSNSKWAGEVLLREAHDLCGLPVAVFRCDMILADTTWAGQLNVPDMFTRMILSLAATGIAPGSFYELAADGARQRAHYDGLPVEFIAEAISTLGAQSQDGFHTYHVMNPYDDGIGLDEFVDWLNESGCPIQRIADYGDWLQRFETALRALPDRQRHSSLLPLLHNYRQPERPVRGSIAPTDRFRAAVQEAKIGPDKDIPHVGAPIIVKYVSDLRLLGLL</sequence>
<gene>
    <name evidence="2" type="primary">car</name>
    <name type="synonym">fadD9</name>
    <name type="ordered locus">MMAR_2117</name>
</gene>
<reference key="1">
    <citation type="journal article" date="2008" name="Genome Res.">
        <title>Insights from the complete genome sequence of Mycobacterium marinum on the evolution of Mycobacterium tuberculosis.</title>
        <authorList>
            <person name="Stinear T.P."/>
            <person name="Seemann T."/>
            <person name="Harrison P.F."/>
            <person name="Jenkin G.A."/>
            <person name="Davies J.K."/>
            <person name="Johnson P.D."/>
            <person name="Abdellah Z."/>
            <person name="Arrowsmith C."/>
            <person name="Chillingworth T."/>
            <person name="Churcher C."/>
            <person name="Clarke K."/>
            <person name="Cronin A."/>
            <person name="Davis P."/>
            <person name="Goodhead I."/>
            <person name="Holroyd N."/>
            <person name="Jagels K."/>
            <person name="Lord A."/>
            <person name="Moule S."/>
            <person name="Mungall K."/>
            <person name="Norbertczak H."/>
            <person name="Quail M.A."/>
            <person name="Rabbinowitsch E."/>
            <person name="Walker D."/>
            <person name="White B."/>
            <person name="Whitehead S."/>
            <person name="Small P.L."/>
            <person name="Brosch R."/>
            <person name="Ramakrishnan L."/>
            <person name="Fischbach M.A."/>
            <person name="Parkhill J."/>
            <person name="Cole S.T."/>
        </authorList>
    </citation>
    <scope>NUCLEOTIDE SEQUENCE [LARGE SCALE GENOMIC DNA]</scope>
    <source>
        <strain>ATCC BAA-535 / M</strain>
    </source>
</reference>
<reference key="2">
    <citation type="journal article" date="2013" name="Proc. Natl. Acad. Sci. U.S.A.">
        <title>Carboxylic acid reductase is a versatile enzyme for the conversion of fatty acids into fuels and chemical commodities.</title>
        <authorList>
            <person name="Akhtar M.K."/>
            <person name="Turner N.J."/>
            <person name="Jones P.R."/>
        </authorList>
    </citation>
    <scope>FUNCTION</scope>
    <scope>CATALYTIC ACTIVITY</scope>
    <scope>SUBSTRATE SPECIFICITY</scope>
    <scope>BIOPHYSICOCHEMICAL PROPERTIES</scope>
    <scope>COFACTOR</scope>
    <scope>BIOTECHNOLOGY</scope>
</reference>
<reference evidence="8 9" key="3">
    <citation type="journal article" date="2017" name="Nat. Chem. Biol.">
        <title>Structures of carboxylic acid reductase reveal domain dynamics underlying catalysis.</title>
        <authorList>
            <person name="Gahloth D."/>
            <person name="Dunstan M.S."/>
            <person name="Quaglia D."/>
            <person name="Klumbys E."/>
            <person name="Lockhart-Cairns M.P."/>
            <person name="Hill A.M."/>
            <person name="Derrington S.R."/>
            <person name="Scrutton N.S."/>
            <person name="Turner N.J."/>
            <person name="Leys D."/>
        </authorList>
    </citation>
    <scope>X-RAY CRYSTALLOGRAPHY (1.20 ANGSTROMS) IN COMPLEX WITH NADP</scope>
    <scope>DOMAIN</scope>
</reference>
<name>CAR_MYCMM</name>
<protein>
    <recommendedName>
        <fullName evidence="2 5">Carboxylic acid reductase</fullName>
        <shortName evidence="2 5">CAR</shortName>
        <ecNumber evidence="2">1.2.1.-</ecNumber>
    </recommendedName>
    <alternativeName>
        <fullName evidence="2">ATP/NADPH-dependent carboxylic acid reductase</fullName>
    </alternativeName>
    <alternativeName>
        <fullName>Fatty acid reductase</fullName>
    </alternativeName>
</protein>
<feature type="chain" id="PRO_0000425448" description="Carboxylic acid reductase">
    <location>
        <begin position="1"/>
        <end position="1174"/>
    </location>
</feature>
<feature type="domain" description="Carrier" evidence="2">
    <location>
        <begin position="651"/>
        <end position="726"/>
    </location>
</feature>
<feature type="binding site" evidence="2">
    <location>
        <position position="297"/>
    </location>
    <ligand>
        <name>AMP</name>
        <dbReference type="ChEBI" id="CHEBI:456215"/>
    </ligand>
</feature>
<feature type="binding site" evidence="2">
    <location>
        <position position="392"/>
    </location>
    <ligand>
        <name>AMP</name>
        <dbReference type="ChEBI" id="CHEBI:456215"/>
    </ligand>
</feature>
<feature type="binding site" evidence="2">
    <location>
        <begin position="413"/>
        <end position="414"/>
    </location>
    <ligand>
        <name>AMP</name>
        <dbReference type="ChEBI" id="CHEBI:456215"/>
    </ligand>
</feature>
<feature type="binding site" evidence="2">
    <location>
        <position position="418"/>
    </location>
    <ligand>
        <name>AMP</name>
        <dbReference type="ChEBI" id="CHEBI:456215"/>
    </ligand>
</feature>
<feature type="binding site" evidence="2">
    <location>
        <position position="491"/>
    </location>
    <ligand>
        <name>AMP</name>
        <dbReference type="ChEBI" id="CHEBI:456215"/>
    </ligand>
</feature>
<feature type="binding site" evidence="2">
    <location>
        <begin position="503"/>
        <end position="506"/>
    </location>
    <ligand>
        <name>AMP</name>
        <dbReference type="ChEBI" id="CHEBI:456215"/>
    </ligand>
</feature>
<feature type="binding site" evidence="2">
    <location>
        <position position="512"/>
    </location>
    <ligand>
        <name>AMP</name>
        <dbReference type="ChEBI" id="CHEBI:456215"/>
    </ligand>
</feature>
<feature type="binding site" evidence="2">
    <location>
        <position position="612"/>
    </location>
    <ligand>
        <name>AMP</name>
        <dbReference type="ChEBI" id="CHEBI:456215"/>
    </ligand>
</feature>
<feature type="binding site" evidence="4 8 9">
    <location>
        <begin position="787"/>
        <end position="791"/>
    </location>
    <ligand>
        <name>NADP(+)</name>
        <dbReference type="ChEBI" id="CHEBI:58349"/>
    </ligand>
</feature>
<feature type="binding site" evidence="2 4 8 9">
    <location>
        <position position="814"/>
    </location>
    <ligand>
        <name>NADP(+)</name>
        <dbReference type="ChEBI" id="CHEBI:58349"/>
    </ligand>
</feature>
<feature type="binding site" evidence="2 4 8 9">
    <location>
        <position position="824"/>
    </location>
    <ligand>
        <name>NADP(+)</name>
        <dbReference type="ChEBI" id="CHEBI:58349"/>
    </ligand>
</feature>
<feature type="binding site" evidence="2 4 8 9">
    <location>
        <begin position="854"/>
        <end position="855"/>
    </location>
    <ligand>
        <name>NADP(+)</name>
        <dbReference type="ChEBI" id="CHEBI:58349"/>
    </ligand>
</feature>
<feature type="binding site" evidence="2 4 8 9">
    <location>
        <begin position="880"/>
        <end position="882"/>
    </location>
    <ligand>
        <name>NADP(+)</name>
        <dbReference type="ChEBI" id="CHEBI:58349"/>
    </ligand>
</feature>
<feature type="binding site" evidence="4 8 9">
    <location>
        <begin position="919"/>
        <end position="920"/>
    </location>
    <ligand>
        <name>NADP(+)</name>
        <dbReference type="ChEBI" id="CHEBI:58349"/>
    </ligand>
</feature>
<feature type="binding site" evidence="2 4 8 9">
    <location>
        <position position="956"/>
    </location>
    <ligand>
        <name>NADP(+)</name>
        <dbReference type="ChEBI" id="CHEBI:58349"/>
    </ligand>
</feature>
<feature type="binding site" evidence="2 4 8 9">
    <location>
        <position position="960"/>
    </location>
    <ligand>
        <name>NADP(+)</name>
        <dbReference type="ChEBI" id="CHEBI:58349"/>
    </ligand>
</feature>
<feature type="modified residue" description="O-(pantetheine 4'-phosphoryl)serine" evidence="2">
    <location>
        <position position="685"/>
    </location>
</feature>
<feature type="helix" evidence="11">
    <location>
        <begin position="716"/>
        <end position="725"/>
    </location>
</feature>
<feature type="helix" evidence="10">
    <location>
        <begin position="735"/>
        <end position="739"/>
    </location>
</feature>
<feature type="strand" evidence="10">
    <location>
        <begin position="748"/>
        <end position="750"/>
    </location>
</feature>
<feature type="helix" evidence="10">
    <location>
        <begin position="751"/>
        <end position="753"/>
    </location>
</feature>
<feature type="helix" evidence="10">
    <location>
        <begin position="756"/>
        <end position="758"/>
    </location>
</feature>
<feature type="helix" evidence="10">
    <location>
        <begin position="762"/>
        <end position="767"/>
    </location>
</feature>
<feature type="helix" evidence="10">
    <location>
        <begin position="768"/>
        <end position="770"/>
    </location>
</feature>
<feature type="strand" evidence="10">
    <location>
        <begin position="780"/>
        <end position="784"/>
    </location>
</feature>
<feature type="helix" evidence="10">
    <location>
        <begin position="789"/>
        <end position="804"/>
    </location>
</feature>
<feature type="strand" evidence="10">
    <location>
        <begin position="808"/>
        <end position="813"/>
    </location>
</feature>
<feature type="strand" evidence="10">
    <location>
        <begin position="815"/>
        <end position="817"/>
    </location>
</feature>
<feature type="helix" evidence="10">
    <location>
        <begin position="818"/>
        <end position="828"/>
    </location>
</feature>
<feature type="helix" evidence="10">
    <location>
        <begin position="834"/>
        <end position="847"/>
    </location>
</feature>
<feature type="strand" evidence="10">
    <location>
        <begin position="848"/>
        <end position="852"/>
    </location>
</feature>
<feature type="helix" evidence="10">
    <location>
        <begin position="858"/>
        <end position="861"/>
    </location>
</feature>
<feature type="helix" evidence="10">
    <location>
        <begin position="864"/>
        <end position="873"/>
    </location>
</feature>
<feature type="strand" evidence="10">
    <location>
        <begin position="876"/>
        <end position="879"/>
    </location>
</feature>
<feature type="strand" evidence="10">
    <location>
        <begin position="886"/>
        <end position="888"/>
    </location>
</feature>
<feature type="helix" evidence="10">
    <location>
        <begin position="890"/>
        <end position="897"/>
    </location>
</feature>
<feature type="helix" evidence="10">
    <location>
        <begin position="899"/>
        <end position="908"/>
    </location>
</feature>
<feature type="strand" evidence="10">
    <location>
        <begin position="910"/>
        <end position="913"/>
    </location>
</feature>
<feature type="strand" evidence="10">
    <location>
        <begin position="916"/>
        <end position="921"/>
    </location>
</feature>
<feature type="helix" evidence="10">
    <location>
        <begin position="922"/>
        <end position="927"/>
    </location>
</feature>
<feature type="helix" evidence="10">
    <location>
        <begin position="930"/>
        <end position="932"/>
    </location>
</feature>
<feature type="strand" evidence="10">
    <location>
        <begin position="935"/>
        <end position="937"/>
    </location>
</feature>
<feature type="helix" evidence="10">
    <location>
        <begin position="939"/>
        <end position="942"/>
    </location>
</feature>
<feature type="strand" evidence="10">
    <location>
        <begin position="944"/>
        <end position="947"/>
    </location>
</feature>
<feature type="strand" evidence="10">
    <location>
        <begin position="949"/>
        <end position="951"/>
    </location>
</feature>
<feature type="helix" evidence="10">
    <location>
        <begin position="954"/>
        <end position="974"/>
    </location>
</feature>
<feature type="strand" evidence="10">
    <location>
        <begin position="978"/>
        <end position="983"/>
    </location>
</feature>
<feature type="strand" evidence="11">
    <location>
        <begin position="985"/>
        <end position="987"/>
    </location>
</feature>
<feature type="strand" evidence="10">
    <location>
        <begin position="990"/>
        <end position="992"/>
    </location>
</feature>
<feature type="helix" evidence="10">
    <location>
        <begin position="1001"/>
        <end position="1012"/>
    </location>
</feature>
<feature type="strand" evidence="10">
    <location>
        <begin position="1014"/>
        <end position="1017"/>
    </location>
</feature>
<feature type="strand" evidence="11">
    <location>
        <begin position="1035"/>
        <end position="1037"/>
    </location>
</feature>
<feature type="helix" evidence="10">
    <location>
        <begin position="1038"/>
        <end position="1048"/>
    </location>
</feature>
<feature type="helix" evidence="10">
    <location>
        <begin position="1050"/>
        <end position="1052"/>
    </location>
</feature>
<feature type="strand" evidence="10">
    <location>
        <begin position="1053"/>
        <end position="1060"/>
    </location>
</feature>
<feature type="helix" evidence="10">
    <location>
        <begin position="1071"/>
        <end position="1080"/>
    </location>
</feature>
<feature type="strand" evidence="10">
    <location>
        <begin position="1086"/>
        <end position="1090"/>
    </location>
</feature>
<feature type="helix" evidence="10">
    <location>
        <begin position="1091"/>
        <end position="1103"/>
    </location>
</feature>
<feature type="helix" evidence="10">
    <location>
        <begin position="1107"/>
        <end position="1111"/>
    </location>
</feature>
<feature type="helix" evidence="10">
    <location>
        <begin position="1115"/>
        <end position="1121"/>
    </location>
</feature>
<feature type="helix" evidence="10">
    <location>
        <begin position="1136"/>
        <end position="1144"/>
    </location>
</feature>
<feature type="turn" evidence="10">
    <location>
        <begin position="1148"/>
        <end position="1151"/>
    </location>
</feature>
<feature type="helix" evidence="10">
    <location>
        <begin position="1158"/>
        <end position="1170"/>
    </location>
</feature>